<proteinExistence type="inferred from homology"/>
<name>CH10_PSYA2</name>
<organism>
    <name type="scientific">Psychrobacter arcticus (strain DSM 17307 / VKM B-2377 / 273-4)</name>
    <dbReference type="NCBI Taxonomy" id="259536"/>
    <lineage>
        <taxon>Bacteria</taxon>
        <taxon>Pseudomonadati</taxon>
        <taxon>Pseudomonadota</taxon>
        <taxon>Gammaproteobacteria</taxon>
        <taxon>Moraxellales</taxon>
        <taxon>Moraxellaceae</taxon>
        <taxon>Psychrobacter</taxon>
    </lineage>
</organism>
<gene>
    <name evidence="1" type="primary">groES</name>
    <name evidence="1" type="synonym">groS</name>
    <name type="ordered locus">Psyc_0552</name>
</gene>
<feature type="chain" id="PRO_1000025342" description="Co-chaperonin GroES">
    <location>
        <begin position="1"/>
        <end position="96"/>
    </location>
</feature>
<feature type="region of interest" description="Disordered" evidence="2">
    <location>
        <begin position="26"/>
        <end position="48"/>
    </location>
</feature>
<evidence type="ECO:0000255" key="1">
    <source>
        <dbReference type="HAMAP-Rule" id="MF_00580"/>
    </source>
</evidence>
<evidence type="ECO:0000256" key="2">
    <source>
        <dbReference type="SAM" id="MobiDB-lite"/>
    </source>
</evidence>
<reference key="1">
    <citation type="journal article" date="2010" name="Appl. Environ. Microbiol.">
        <title>The genome sequence of Psychrobacter arcticus 273-4, a psychroactive Siberian permafrost bacterium, reveals mechanisms for adaptation to low-temperature growth.</title>
        <authorList>
            <person name="Ayala-del-Rio H.L."/>
            <person name="Chain P.S."/>
            <person name="Grzymski J.J."/>
            <person name="Ponder M.A."/>
            <person name="Ivanova N."/>
            <person name="Bergholz P.W."/>
            <person name="Di Bartolo G."/>
            <person name="Hauser L."/>
            <person name="Land M."/>
            <person name="Bakermans C."/>
            <person name="Rodrigues D."/>
            <person name="Klappenbach J."/>
            <person name="Zarka D."/>
            <person name="Larimer F."/>
            <person name="Richardson P."/>
            <person name="Murray A."/>
            <person name="Thomashow M."/>
            <person name="Tiedje J.M."/>
        </authorList>
    </citation>
    <scope>NUCLEOTIDE SEQUENCE [LARGE SCALE GENOMIC DNA]</scope>
    <source>
        <strain>DSM 17307 / VKM B-2377 / 273-4</strain>
    </source>
</reference>
<keyword id="KW-0143">Chaperone</keyword>
<keyword id="KW-0963">Cytoplasm</keyword>
<keyword id="KW-1185">Reference proteome</keyword>
<dbReference type="EMBL" id="CP000082">
    <property type="protein sequence ID" value="AAZ18413.1"/>
    <property type="molecule type" value="Genomic_DNA"/>
</dbReference>
<dbReference type="SMR" id="Q4FU95"/>
<dbReference type="STRING" id="259536.Psyc_0552"/>
<dbReference type="KEGG" id="par:Psyc_0552"/>
<dbReference type="eggNOG" id="COG0234">
    <property type="taxonomic scope" value="Bacteria"/>
</dbReference>
<dbReference type="HOGENOM" id="CLU_132825_2_0_6"/>
<dbReference type="OrthoDB" id="9806791at2"/>
<dbReference type="Proteomes" id="UP000000546">
    <property type="component" value="Chromosome"/>
</dbReference>
<dbReference type="GO" id="GO:0005737">
    <property type="term" value="C:cytoplasm"/>
    <property type="evidence" value="ECO:0007669"/>
    <property type="project" value="UniProtKB-SubCell"/>
</dbReference>
<dbReference type="GO" id="GO:0005524">
    <property type="term" value="F:ATP binding"/>
    <property type="evidence" value="ECO:0007669"/>
    <property type="project" value="InterPro"/>
</dbReference>
<dbReference type="GO" id="GO:0046872">
    <property type="term" value="F:metal ion binding"/>
    <property type="evidence" value="ECO:0007669"/>
    <property type="project" value="TreeGrafter"/>
</dbReference>
<dbReference type="GO" id="GO:0044183">
    <property type="term" value="F:protein folding chaperone"/>
    <property type="evidence" value="ECO:0007669"/>
    <property type="project" value="InterPro"/>
</dbReference>
<dbReference type="GO" id="GO:0051087">
    <property type="term" value="F:protein-folding chaperone binding"/>
    <property type="evidence" value="ECO:0007669"/>
    <property type="project" value="TreeGrafter"/>
</dbReference>
<dbReference type="GO" id="GO:0051082">
    <property type="term" value="F:unfolded protein binding"/>
    <property type="evidence" value="ECO:0007669"/>
    <property type="project" value="TreeGrafter"/>
</dbReference>
<dbReference type="GO" id="GO:0051085">
    <property type="term" value="P:chaperone cofactor-dependent protein refolding"/>
    <property type="evidence" value="ECO:0007669"/>
    <property type="project" value="TreeGrafter"/>
</dbReference>
<dbReference type="CDD" id="cd00320">
    <property type="entry name" value="cpn10"/>
    <property type="match status" value="1"/>
</dbReference>
<dbReference type="FunFam" id="2.30.33.40:FF:000001">
    <property type="entry name" value="10 kDa chaperonin"/>
    <property type="match status" value="1"/>
</dbReference>
<dbReference type="Gene3D" id="2.30.33.40">
    <property type="entry name" value="GroES chaperonin"/>
    <property type="match status" value="1"/>
</dbReference>
<dbReference type="HAMAP" id="MF_00580">
    <property type="entry name" value="CH10"/>
    <property type="match status" value="1"/>
</dbReference>
<dbReference type="InterPro" id="IPR020818">
    <property type="entry name" value="Chaperonin_GroES"/>
</dbReference>
<dbReference type="InterPro" id="IPR037124">
    <property type="entry name" value="Chaperonin_GroES_sf"/>
</dbReference>
<dbReference type="InterPro" id="IPR018369">
    <property type="entry name" value="Chaprnonin_Cpn10_CS"/>
</dbReference>
<dbReference type="InterPro" id="IPR011032">
    <property type="entry name" value="GroES-like_sf"/>
</dbReference>
<dbReference type="NCBIfam" id="NF001527">
    <property type="entry name" value="PRK00364.1-2"/>
    <property type="match status" value="1"/>
</dbReference>
<dbReference type="NCBIfam" id="NF001529">
    <property type="entry name" value="PRK00364.1-5"/>
    <property type="match status" value="1"/>
</dbReference>
<dbReference type="NCBIfam" id="NF001531">
    <property type="entry name" value="PRK00364.2-2"/>
    <property type="match status" value="1"/>
</dbReference>
<dbReference type="NCBIfam" id="NF001533">
    <property type="entry name" value="PRK00364.2-4"/>
    <property type="match status" value="1"/>
</dbReference>
<dbReference type="PANTHER" id="PTHR10772">
    <property type="entry name" value="10 KDA HEAT SHOCK PROTEIN"/>
    <property type="match status" value="1"/>
</dbReference>
<dbReference type="PANTHER" id="PTHR10772:SF58">
    <property type="entry name" value="CO-CHAPERONIN GROES"/>
    <property type="match status" value="1"/>
</dbReference>
<dbReference type="Pfam" id="PF00166">
    <property type="entry name" value="Cpn10"/>
    <property type="match status" value="1"/>
</dbReference>
<dbReference type="PRINTS" id="PR00297">
    <property type="entry name" value="CHAPERONIN10"/>
</dbReference>
<dbReference type="SMART" id="SM00883">
    <property type="entry name" value="Cpn10"/>
    <property type="match status" value="1"/>
</dbReference>
<dbReference type="SUPFAM" id="SSF50129">
    <property type="entry name" value="GroES-like"/>
    <property type="match status" value="1"/>
</dbReference>
<dbReference type="PROSITE" id="PS00681">
    <property type="entry name" value="CHAPERONINS_CPN10"/>
    <property type="match status" value="1"/>
</dbReference>
<sequence length="96" mass="10358">MNIRPLHDRIVVRRIEEETKTAGGILLPGSAQEKPSQGEVLATGNGQIRDNGETRALDVKTGDKVLFGQYAGQTVKVDGEELLIMKESDVLGVLEG</sequence>
<comment type="function">
    <text evidence="1">Together with the chaperonin GroEL, plays an essential role in assisting protein folding. The GroEL-GroES system forms a nano-cage that allows encapsulation of the non-native substrate proteins and provides a physical environment optimized to promote and accelerate protein folding. GroES binds to the apical surface of the GroEL ring, thereby capping the opening of the GroEL channel.</text>
</comment>
<comment type="subunit">
    <text evidence="1">Heptamer of 7 subunits arranged in a ring. Interacts with the chaperonin GroEL.</text>
</comment>
<comment type="subcellular location">
    <subcellularLocation>
        <location evidence="1">Cytoplasm</location>
    </subcellularLocation>
</comment>
<comment type="similarity">
    <text evidence="1">Belongs to the GroES chaperonin family.</text>
</comment>
<accession>Q4FU95</accession>
<protein>
    <recommendedName>
        <fullName evidence="1">Co-chaperonin GroES</fullName>
    </recommendedName>
    <alternativeName>
        <fullName evidence="1">10 kDa chaperonin</fullName>
    </alternativeName>
    <alternativeName>
        <fullName evidence="1">Chaperonin-10</fullName>
        <shortName evidence="1">Cpn10</shortName>
    </alternativeName>
</protein>